<accession>B9KEU1</accession>
<reference key="1">
    <citation type="journal article" date="2008" name="Foodborne Pathog. Dis.">
        <title>The complete genome sequence and analysis of the human pathogen Campylobacter lari.</title>
        <authorList>
            <person name="Miller W.G."/>
            <person name="Wang G."/>
            <person name="Binnewies T.T."/>
            <person name="Parker C.T."/>
        </authorList>
    </citation>
    <scope>NUCLEOTIDE SEQUENCE [LARGE SCALE GENOMIC DNA]</scope>
    <source>
        <strain>RM2100 / D67 / ATCC BAA-1060</strain>
    </source>
</reference>
<feature type="chain" id="PRO_1000199815" description="Ribosomal RNA large subunit methyltransferase H">
    <location>
        <begin position="1"/>
        <end position="151"/>
    </location>
</feature>
<feature type="binding site" evidence="1">
    <location>
        <position position="73"/>
    </location>
    <ligand>
        <name>S-adenosyl-L-methionine</name>
        <dbReference type="ChEBI" id="CHEBI:59789"/>
    </ligand>
</feature>
<feature type="binding site" evidence="1">
    <location>
        <position position="100"/>
    </location>
    <ligand>
        <name>S-adenosyl-L-methionine</name>
        <dbReference type="ChEBI" id="CHEBI:59789"/>
    </ligand>
</feature>
<feature type="binding site" evidence="1">
    <location>
        <begin position="119"/>
        <end position="124"/>
    </location>
    <ligand>
        <name>S-adenosyl-L-methionine</name>
        <dbReference type="ChEBI" id="CHEBI:59789"/>
    </ligand>
</feature>
<gene>
    <name evidence="1" type="primary">rlmH</name>
    <name type="ordered locus">Cla_0213</name>
</gene>
<proteinExistence type="inferred from homology"/>
<organism>
    <name type="scientific">Campylobacter lari (strain RM2100 / D67 / ATCC BAA-1060)</name>
    <dbReference type="NCBI Taxonomy" id="306263"/>
    <lineage>
        <taxon>Bacteria</taxon>
        <taxon>Pseudomonadati</taxon>
        <taxon>Campylobacterota</taxon>
        <taxon>Epsilonproteobacteria</taxon>
        <taxon>Campylobacterales</taxon>
        <taxon>Campylobacteraceae</taxon>
        <taxon>Campylobacter</taxon>
    </lineage>
</organism>
<keyword id="KW-0963">Cytoplasm</keyword>
<keyword id="KW-0489">Methyltransferase</keyword>
<keyword id="KW-1185">Reference proteome</keyword>
<keyword id="KW-0698">rRNA processing</keyword>
<keyword id="KW-0949">S-adenosyl-L-methionine</keyword>
<keyword id="KW-0808">Transferase</keyword>
<comment type="function">
    <text evidence="1">Specifically methylates the pseudouridine at position 1915 (m3Psi1915) in 23S rRNA.</text>
</comment>
<comment type="catalytic activity">
    <reaction evidence="1">
        <text>pseudouridine(1915) in 23S rRNA + S-adenosyl-L-methionine = N(3)-methylpseudouridine(1915) in 23S rRNA + S-adenosyl-L-homocysteine + H(+)</text>
        <dbReference type="Rhea" id="RHEA:42752"/>
        <dbReference type="Rhea" id="RHEA-COMP:10221"/>
        <dbReference type="Rhea" id="RHEA-COMP:10222"/>
        <dbReference type="ChEBI" id="CHEBI:15378"/>
        <dbReference type="ChEBI" id="CHEBI:57856"/>
        <dbReference type="ChEBI" id="CHEBI:59789"/>
        <dbReference type="ChEBI" id="CHEBI:65314"/>
        <dbReference type="ChEBI" id="CHEBI:74486"/>
        <dbReference type="EC" id="2.1.1.177"/>
    </reaction>
</comment>
<comment type="subunit">
    <text evidence="1">Homodimer.</text>
</comment>
<comment type="subcellular location">
    <subcellularLocation>
        <location evidence="1">Cytoplasm</location>
    </subcellularLocation>
</comment>
<comment type="similarity">
    <text evidence="1">Belongs to the RNA methyltransferase RlmH family.</text>
</comment>
<sequence length="151" mass="17537">MQINLLSIQKNNNDEFSKIDEHYTKLIKKFCSFNEICVFNNKINQAQNTNSIEAKKSYTNALNPYKKGFCIALDEKGKEFTSVEFAKLLQDKNEITFFIGGAYGFEQEFIAQMHTSIALSKMTLVHKFAKTMLLEQIYRAFCINTNHPYHK</sequence>
<evidence type="ECO:0000255" key="1">
    <source>
        <dbReference type="HAMAP-Rule" id="MF_00658"/>
    </source>
</evidence>
<dbReference type="EC" id="2.1.1.177" evidence="1"/>
<dbReference type="EMBL" id="CP000932">
    <property type="protein sequence ID" value="ACM63576.1"/>
    <property type="molecule type" value="Genomic_DNA"/>
</dbReference>
<dbReference type="RefSeq" id="WP_012660960.1">
    <property type="nucleotide sequence ID" value="NC_012039.1"/>
</dbReference>
<dbReference type="SMR" id="B9KEU1"/>
<dbReference type="STRING" id="306263.Cla_0213"/>
<dbReference type="KEGG" id="cla:CLA_0213"/>
<dbReference type="PATRIC" id="fig|306263.5.peg.212"/>
<dbReference type="eggNOG" id="COG1576">
    <property type="taxonomic scope" value="Bacteria"/>
</dbReference>
<dbReference type="HOGENOM" id="CLU_100552_2_1_7"/>
<dbReference type="Proteomes" id="UP000007727">
    <property type="component" value="Chromosome"/>
</dbReference>
<dbReference type="GO" id="GO:0005737">
    <property type="term" value="C:cytoplasm"/>
    <property type="evidence" value="ECO:0007669"/>
    <property type="project" value="UniProtKB-SubCell"/>
</dbReference>
<dbReference type="GO" id="GO:0070038">
    <property type="term" value="F:rRNA (pseudouridine-N3-)-methyltransferase activity"/>
    <property type="evidence" value="ECO:0007669"/>
    <property type="project" value="UniProtKB-UniRule"/>
</dbReference>
<dbReference type="CDD" id="cd18081">
    <property type="entry name" value="RlmH-like"/>
    <property type="match status" value="1"/>
</dbReference>
<dbReference type="Gene3D" id="3.40.1280.10">
    <property type="match status" value="1"/>
</dbReference>
<dbReference type="HAMAP" id="MF_00658">
    <property type="entry name" value="23SrRNA_methyltr_H"/>
    <property type="match status" value="1"/>
</dbReference>
<dbReference type="InterPro" id="IPR029028">
    <property type="entry name" value="Alpha/beta_knot_MTases"/>
</dbReference>
<dbReference type="InterPro" id="IPR003742">
    <property type="entry name" value="RlmH-like"/>
</dbReference>
<dbReference type="InterPro" id="IPR029026">
    <property type="entry name" value="tRNA_m1G_MTases_N"/>
</dbReference>
<dbReference type="PANTHER" id="PTHR33603">
    <property type="entry name" value="METHYLTRANSFERASE"/>
    <property type="match status" value="1"/>
</dbReference>
<dbReference type="PANTHER" id="PTHR33603:SF1">
    <property type="entry name" value="RIBOSOMAL RNA LARGE SUBUNIT METHYLTRANSFERASE H"/>
    <property type="match status" value="1"/>
</dbReference>
<dbReference type="Pfam" id="PF02590">
    <property type="entry name" value="SPOUT_MTase"/>
    <property type="match status" value="1"/>
</dbReference>
<dbReference type="PIRSF" id="PIRSF004505">
    <property type="entry name" value="MT_bac"/>
    <property type="match status" value="1"/>
</dbReference>
<dbReference type="SUPFAM" id="SSF75217">
    <property type="entry name" value="alpha/beta knot"/>
    <property type="match status" value="1"/>
</dbReference>
<protein>
    <recommendedName>
        <fullName evidence="1">Ribosomal RNA large subunit methyltransferase H</fullName>
        <ecNumber evidence="1">2.1.1.177</ecNumber>
    </recommendedName>
    <alternativeName>
        <fullName evidence="1">23S rRNA (pseudouridine1915-N3)-methyltransferase</fullName>
    </alternativeName>
    <alternativeName>
        <fullName evidence="1">23S rRNA m3Psi1915 methyltransferase</fullName>
    </alternativeName>
    <alternativeName>
        <fullName evidence="1">rRNA (pseudouridine-N3-)-methyltransferase RlmH</fullName>
    </alternativeName>
</protein>
<name>RLMH_CAMLR</name>